<protein>
    <recommendedName>
        <fullName>Chalcone synthase 2</fullName>
        <ecNumber>2.3.1.74</ecNumber>
    </recommendedName>
    <alternativeName>
        <fullName>Naringenin-chalcone synthase 2</fullName>
    </alternativeName>
</protein>
<comment type="function">
    <text evidence="3 4 5 6">The primary product of this enzyme is 4,2',4',6'-tetrahydroxychalcone (also termed naringenin-chalcone or chalcone) which can under specific conditions spontaneously isomerize into naringenin.</text>
</comment>
<comment type="catalytic activity">
    <reaction evidence="1">
        <text>(E)-4-coumaroyl-CoA + 3 malonyl-CoA + 3 H(+) = 2',4,4',6'-tetrahydroxychalcone + 3 CO2 + 4 CoA</text>
        <dbReference type="Rhea" id="RHEA:11128"/>
        <dbReference type="ChEBI" id="CHEBI:15378"/>
        <dbReference type="ChEBI" id="CHEBI:15413"/>
        <dbReference type="ChEBI" id="CHEBI:16526"/>
        <dbReference type="ChEBI" id="CHEBI:57287"/>
        <dbReference type="ChEBI" id="CHEBI:57384"/>
        <dbReference type="ChEBI" id="CHEBI:85008"/>
        <dbReference type="EC" id="2.3.1.74"/>
    </reaction>
</comment>
<comment type="biophysicochemical properties">
    <kinetics>
        <KM evidence="3 4 5">4.1 uM for malonyl-CoA</KM>
        <KM evidence="3 4 5">4.5 uM for 4-coumaroyl-CoA</KM>
        <KM evidence="3 4 5">2.2 uM for benzoyl-CoA</KM>
        <KM evidence="3 4 5">4.1 uM for hexanoyl-CoA</KM>
        <KM evidence="3 4 5">5.1 uM for phenylacetyl-CoA</KM>
        <KM evidence="3 4 5">5.2 uM for feruloyl-CoA</KM>
    </kinetics>
</comment>
<comment type="pathway">
    <text>Secondary metabolite biosynthesis; flavonoid biosynthesis.</text>
</comment>
<comment type="subunit">
    <text evidence="8 9">Homodimer.</text>
</comment>
<comment type="similarity">
    <text evidence="7">Belongs to the thiolase-like superfamily. Chalcone/stilbene synthases family.</text>
</comment>
<name>CHS2_MEDSA</name>
<reference key="1">
    <citation type="journal article" date="1993" name="Plant Mol. Biol.">
        <title>Stress responses in alfalfa (Medicago sativa L.). 15. Characterization and expression patterns of members of a subset of the chalcone synthase multigene family.</title>
        <authorList>
            <person name="Junghans H."/>
            <person name="Dalkin K."/>
            <person name="Dixon R.A."/>
        </authorList>
    </citation>
    <scope>NUCLEOTIDE SEQUENCE [MRNA]</scope>
</reference>
<reference key="2">
    <citation type="journal article" date="1999" name="Nat. Struct. Biol.">
        <title>Structure of chalcone synthase and the molecular basis of plant polyketide biosynthesis.</title>
        <authorList>
            <person name="Ferrer J.L."/>
            <person name="Jez J.M."/>
            <person name="Bowman M.E."/>
            <person name="Dixon R.A."/>
            <person name="Noel J.P."/>
        </authorList>
    </citation>
    <scope>X-RAY CRYSTALLOGRAPHY (1.56 ANGSTROMS) IN COMPLEX WITH SUBSTRATE AND COENZYME A</scope>
</reference>
<reference key="3">
    <citation type="journal article" date="2000" name="Biochemistry">
        <title>Dissection of malonyl-coenzyme A decarboxylation from polyketide formation in the reaction mechanism of a plant polyketide synthase.</title>
        <authorList>
            <person name="Jez J.M."/>
            <person name="Ferrer J.L."/>
            <person name="Bowman M.E."/>
            <person name="Dixon R.A."/>
            <person name="Noel J.P."/>
        </authorList>
    </citation>
    <scope>X-RAY CRYSTALLOGRAPHY (1.69 ANGSTROMS) IN COMPLEX WITH COENZYME A</scope>
    <scope>FUNCTION</scope>
    <scope>BIOPHYSICOCHEMICAL PROPERTIES</scope>
    <scope>MUTAGENESIS OF CYS-164; PHE-215; HIS-303 AND ASN-336</scope>
</reference>
<reference key="4">
    <citation type="journal article" date="2001" name="Biochemistry">
        <title>Structure-guided programming of polyketide chain-length determination in chalcone synthase.</title>
        <authorList>
            <person name="Jez J.M."/>
            <person name="Bowman M.E."/>
            <person name="Noel J.P."/>
        </authorList>
    </citation>
    <scope>X-RAY CRYSTALLOGRAPHY (1.45 ANGSTROMS)</scope>
    <scope>FUNCTION</scope>
    <scope>BIOPHYSICOCHEMICAL PROPERTIES</scope>
    <scope>MUTAGENESIS OF GLY-256</scope>
</reference>
<reference key="5">
    <citation type="journal article" date="2002" name="Proc. Natl. Acad. Sci. U.S.A.">
        <title>Expanding the biosynthetic repertoire of plant type III polyketide synthases by altering starter molecule specificity.</title>
        <authorList>
            <person name="Jez J.M."/>
            <person name="Bowman M.E."/>
            <person name="Noel J.P."/>
        </authorList>
    </citation>
    <scope>X-RAY CRYSTALLOGRAPHY (1.63 ANGSTROMS)</scope>
    <scope>FUNCTION</scope>
    <scope>BIOPHYSICOCHEMICAL PROPERTIES</scope>
    <scope>MUTAGENESIS OF PHE-215 AND PHE-265</scope>
</reference>
<reference key="6">
    <citation type="journal article" date="2004" name="Chem. Biol.">
        <title>An aldol switch discovered in stilbene synthases mediates cyclization specificity of type III polyketide synthases.</title>
        <authorList>
            <person name="Austin M.B."/>
            <person name="Bowman M.E."/>
            <person name="Ferrer J.-L."/>
            <person name="Schroeder J."/>
            <person name="Noel J.P."/>
        </authorList>
    </citation>
    <scope>X-RAY CRYSTALLOGRAPHY (1.90 ANGSTROMS)</scope>
    <scope>FUNCTION</scope>
</reference>
<sequence length="389" mass="42706">MVSVSEIRKAQRAEGPATILAIGTANPANCVEQSTYPDFYFKITNSEHKTELKEKFQRMCDKSMIKRRYMYLTEEILKENPNVCEYMAPSLDARQDMVVVEVPRLGKEAAVKAIKEWGQPKSKITHLIVCTTSGVDMPGADYQLTKLLGLRPYVKRYMMYQQGCFAGGTVLRLAKDLAENNKGARVLVVCSEVTAVTFRGPSDTHLDSLVGQALFGDGAAALIVGSDPVPEIEKPIFEMVWTAQTIAPDSEGAIDGHLREAGLTFHLLKDVPGIVSKNITKALVEAFEPLGISDYNSIFWIAHPGGPAILDQVEQKLALKPEKMNATREVLSEYGNMSSACVLFILDEMRKKSTQNGLKTTGEGLEWGVLFGFGPGLTIETVVLRSVAI</sequence>
<evidence type="ECO:0000255" key="1">
    <source>
        <dbReference type="PROSITE-ProRule" id="PRU10023"/>
    </source>
</evidence>
<evidence type="ECO:0000269" key="2">
    <source>
    </source>
</evidence>
<evidence type="ECO:0000269" key="3">
    <source>
    </source>
</evidence>
<evidence type="ECO:0000269" key="4">
    <source>
    </source>
</evidence>
<evidence type="ECO:0000269" key="5">
    <source>
    </source>
</evidence>
<evidence type="ECO:0000269" key="6">
    <source>
    </source>
</evidence>
<evidence type="ECO:0000305" key="7"/>
<evidence type="ECO:0000305" key="8">
    <source>
    </source>
</evidence>
<evidence type="ECO:0000305" key="9">
    <source>
    </source>
</evidence>
<evidence type="ECO:0007829" key="10">
    <source>
        <dbReference type="PDB" id="1I88"/>
    </source>
</evidence>
<evidence type="ECO:0007829" key="11">
    <source>
        <dbReference type="PDB" id="1U0V"/>
    </source>
</evidence>
<proteinExistence type="evidence at protein level"/>
<organism>
    <name type="scientific">Medicago sativa</name>
    <name type="common">Alfalfa</name>
    <dbReference type="NCBI Taxonomy" id="3879"/>
    <lineage>
        <taxon>Eukaryota</taxon>
        <taxon>Viridiplantae</taxon>
        <taxon>Streptophyta</taxon>
        <taxon>Embryophyta</taxon>
        <taxon>Tracheophyta</taxon>
        <taxon>Spermatophyta</taxon>
        <taxon>Magnoliopsida</taxon>
        <taxon>eudicotyledons</taxon>
        <taxon>Gunneridae</taxon>
        <taxon>Pentapetalae</taxon>
        <taxon>rosids</taxon>
        <taxon>fabids</taxon>
        <taxon>Fabales</taxon>
        <taxon>Fabaceae</taxon>
        <taxon>Papilionoideae</taxon>
        <taxon>50 kb inversion clade</taxon>
        <taxon>NPAAA clade</taxon>
        <taxon>Hologalegina</taxon>
        <taxon>IRL clade</taxon>
        <taxon>Trifolieae</taxon>
        <taxon>Medicago</taxon>
    </lineage>
</organism>
<feature type="chain" id="PRO_0000216007" description="Chalcone synthase 2">
    <location>
        <begin position="1"/>
        <end position="389"/>
    </location>
</feature>
<feature type="active site" description="Acyl-thioester intermediate" evidence="7">
    <location>
        <position position="164"/>
    </location>
</feature>
<feature type="binding site">
    <location>
        <begin position="55"/>
        <end position="62"/>
    </location>
    <ligand>
        <name>CoA</name>
        <dbReference type="ChEBI" id="CHEBI:57287"/>
    </ligand>
</feature>
<feature type="binding site" evidence="2">
    <location>
        <position position="197"/>
    </location>
    <ligand>
        <name>substrate</name>
    </ligand>
</feature>
<feature type="binding site">
    <location>
        <begin position="216"/>
        <end position="217"/>
    </location>
    <ligand>
        <name>substrate</name>
    </ligand>
</feature>
<feature type="binding site" evidence="2 3">
    <location>
        <position position="308"/>
    </location>
    <ligand>
        <name>CoA</name>
        <dbReference type="ChEBI" id="CHEBI:57287"/>
    </ligand>
</feature>
<feature type="mutagenesis site" description="Loss of activity." evidence="3">
    <original>C</original>
    <variation>A</variation>
    <variation>D</variation>
    <variation>S</variation>
    <location>
        <position position="164"/>
    </location>
</feature>
<feature type="mutagenesis site" description="Drastically reduces catalytic efficiency." evidence="3 5">
    <original>F</original>
    <variation>S</variation>
    <variation>W</variation>
    <variation>Y</variation>
    <location>
        <position position="215"/>
    </location>
</feature>
<feature type="mutagenesis site" description="Decreases catalytic efficiency 2-fold." evidence="4">
    <original>G</original>
    <variation>A</variation>
    <location>
        <position position="256"/>
    </location>
</feature>
<feature type="mutagenesis site" description="Drastically reduces catalytic efficiency." evidence="4">
    <original>G</original>
    <variation>F</variation>
    <variation>L</variation>
    <location>
        <position position="256"/>
    </location>
</feature>
<feature type="mutagenesis site" description="Decreases catalytic efficiency 7-fold." evidence="4">
    <original>G</original>
    <variation>V</variation>
    <location>
        <position position="256"/>
    </location>
</feature>
<feature type="mutagenesis site" description="Decreases catalytic efficiency 2-fold." evidence="5">
    <original>F</original>
    <variation>V</variation>
    <location>
        <position position="265"/>
    </location>
</feature>
<feature type="mutagenesis site" description="Drastically reduces catalytic efficiency." evidence="3">
    <original>H</original>
    <variation>A</variation>
    <variation>D</variation>
    <variation>N</variation>
    <variation>T</variation>
    <location>
        <position position="303"/>
    </location>
</feature>
<feature type="mutagenesis site" description="Decreases catalytic efficiency 13-fold." evidence="3">
    <original>H</original>
    <variation>Q</variation>
    <location>
        <position position="303"/>
    </location>
</feature>
<feature type="mutagenesis site" description="Drastically reduces catalytic efficiency." evidence="3">
    <original>N</original>
    <variation>A</variation>
    <variation>D</variation>
    <variation>H</variation>
    <variation>K</variation>
    <variation>Q</variation>
    <location>
        <position position="336"/>
    </location>
</feature>
<feature type="helix" evidence="10">
    <location>
        <begin position="4"/>
        <end position="11"/>
    </location>
</feature>
<feature type="strand" evidence="10">
    <location>
        <begin position="18"/>
        <end position="25"/>
    </location>
</feature>
<feature type="strand" evidence="10">
    <location>
        <begin position="30"/>
        <end position="32"/>
    </location>
</feature>
<feature type="helix" evidence="10">
    <location>
        <begin position="33"/>
        <end position="35"/>
    </location>
</feature>
<feature type="helix" evidence="10">
    <location>
        <begin position="36"/>
        <end position="43"/>
    </location>
</feature>
<feature type="helix" evidence="10">
    <location>
        <begin position="50"/>
        <end position="62"/>
    </location>
</feature>
<feature type="strand" evidence="10">
    <location>
        <begin position="67"/>
        <end position="69"/>
    </location>
</feature>
<feature type="helix" evidence="10">
    <location>
        <begin position="74"/>
        <end position="79"/>
    </location>
</feature>
<feature type="helix" evidence="10">
    <location>
        <begin position="81"/>
        <end position="84"/>
    </location>
</feature>
<feature type="strand" evidence="10">
    <location>
        <begin position="85"/>
        <end position="87"/>
    </location>
</feature>
<feature type="helix" evidence="10">
    <location>
        <begin position="91"/>
        <end position="117"/>
    </location>
</feature>
<feature type="helix" evidence="10">
    <location>
        <begin position="121"/>
        <end position="123"/>
    </location>
</feature>
<feature type="strand" evidence="10">
    <location>
        <begin position="126"/>
        <end position="133"/>
    </location>
</feature>
<feature type="strand" evidence="11">
    <location>
        <begin position="136"/>
        <end position="138"/>
    </location>
</feature>
<feature type="helix" evidence="10">
    <location>
        <begin position="140"/>
        <end position="148"/>
    </location>
</feature>
<feature type="strand" evidence="10">
    <location>
        <begin position="155"/>
        <end position="161"/>
    </location>
</feature>
<feature type="helix" evidence="10">
    <location>
        <begin position="166"/>
        <end position="179"/>
    </location>
</feature>
<feature type="strand" evidence="10">
    <location>
        <begin position="185"/>
        <end position="192"/>
    </location>
</feature>
<feature type="helix" evidence="10">
    <location>
        <begin position="194"/>
        <end position="196"/>
    </location>
</feature>
<feature type="helix" evidence="10">
    <location>
        <begin position="206"/>
        <end position="214"/>
    </location>
</feature>
<feature type="strand" evidence="10">
    <location>
        <begin position="218"/>
        <end position="227"/>
    </location>
</feature>
<feature type="turn" evidence="10">
    <location>
        <begin position="230"/>
        <end position="232"/>
    </location>
</feature>
<feature type="strand" evidence="10">
    <location>
        <begin position="237"/>
        <end position="246"/>
    </location>
</feature>
<feature type="strand" evidence="10">
    <location>
        <begin position="253"/>
        <end position="259"/>
    </location>
</feature>
<feature type="strand" evidence="10">
    <location>
        <begin position="262"/>
        <end position="267"/>
    </location>
</feature>
<feature type="helix" evidence="10">
    <location>
        <begin position="271"/>
        <end position="287"/>
    </location>
</feature>
<feature type="helix" evidence="10">
    <location>
        <begin position="288"/>
        <end position="290"/>
    </location>
</feature>
<feature type="strand" evidence="10">
    <location>
        <begin position="297"/>
        <end position="302"/>
    </location>
</feature>
<feature type="helix" evidence="10">
    <location>
        <begin position="307"/>
        <end position="317"/>
    </location>
</feature>
<feature type="helix" evidence="10">
    <location>
        <begin position="321"/>
        <end position="324"/>
    </location>
</feature>
<feature type="helix" evidence="10">
    <location>
        <begin position="325"/>
        <end position="334"/>
    </location>
</feature>
<feature type="helix" evidence="10">
    <location>
        <begin position="338"/>
        <end position="340"/>
    </location>
</feature>
<feature type="helix" evidence="10">
    <location>
        <begin position="341"/>
        <end position="355"/>
    </location>
</feature>
<feature type="turn" evidence="10">
    <location>
        <begin position="361"/>
        <end position="364"/>
    </location>
</feature>
<feature type="strand" evidence="10">
    <location>
        <begin position="366"/>
        <end position="374"/>
    </location>
</feature>
<feature type="turn" evidence="10">
    <location>
        <begin position="375"/>
        <end position="377"/>
    </location>
</feature>
<feature type="strand" evidence="10">
    <location>
        <begin position="378"/>
        <end position="386"/>
    </location>
</feature>
<accession>P30074</accession>
<keyword id="KW-0002">3D-structure</keyword>
<keyword id="KW-0012">Acyltransferase</keyword>
<keyword id="KW-0284">Flavonoid biosynthesis</keyword>
<keyword id="KW-0808">Transferase</keyword>
<gene>
    <name type="primary">CHS2</name>
</gene>
<dbReference type="EC" id="2.3.1.74"/>
<dbReference type="EMBL" id="L02902">
    <property type="protein sequence ID" value="AAA02824.1"/>
    <property type="molecule type" value="mRNA"/>
</dbReference>
<dbReference type="PIR" id="S35164">
    <property type="entry name" value="S35164"/>
</dbReference>
<dbReference type="PDB" id="1BI5">
    <property type="method" value="X-ray"/>
    <property type="resolution" value="1.56 A"/>
    <property type="chains" value="A=1-389"/>
</dbReference>
<dbReference type="PDB" id="1BQ6">
    <property type="method" value="X-ray"/>
    <property type="resolution" value="1.56 A"/>
    <property type="chains" value="A=2-389"/>
</dbReference>
<dbReference type="PDB" id="1CGK">
    <property type="method" value="X-ray"/>
    <property type="resolution" value="1.84 A"/>
    <property type="chains" value="A=1-389"/>
</dbReference>
<dbReference type="PDB" id="1CGZ">
    <property type="method" value="X-ray"/>
    <property type="resolution" value="1.70 A"/>
    <property type="chains" value="A=1-389"/>
</dbReference>
<dbReference type="PDB" id="1CHW">
    <property type="method" value="X-ray"/>
    <property type="resolution" value="1.90 A"/>
    <property type="chains" value="A/B=1-389"/>
</dbReference>
<dbReference type="PDB" id="1CML">
    <property type="method" value="X-ray"/>
    <property type="resolution" value="1.69 A"/>
    <property type="chains" value="A=1-389"/>
</dbReference>
<dbReference type="PDB" id="1D6F">
    <property type="method" value="X-ray"/>
    <property type="resolution" value="1.69 A"/>
    <property type="chains" value="A=1-389"/>
</dbReference>
<dbReference type="PDB" id="1D6H">
    <property type="method" value="X-ray"/>
    <property type="resolution" value="2.15 A"/>
    <property type="chains" value="A=3-389"/>
</dbReference>
<dbReference type="PDB" id="1D6I">
    <property type="method" value="X-ray"/>
    <property type="resolution" value="2.00 A"/>
    <property type="chains" value="A/B=2-389"/>
</dbReference>
<dbReference type="PDB" id="1I86">
    <property type="method" value="X-ray"/>
    <property type="resolution" value="1.50 A"/>
    <property type="chains" value="A=1-389"/>
</dbReference>
<dbReference type="PDB" id="1I88">
    <property type="method" value="X-ray"/>
    <property type="resolution" value="1.45 A"/>
    <property type="chains" value="A/B=1-389"/>
</dbReference>
<dbReference type="PDB" id="1I89">
    <property type="method" value="X-ray"/>
    <property type="resolution" value="1.86 A"/>
    <property type="chains" value="A/B=1-389"/>
</dbReference>
<dbReference type="PDB" id="1I8B">
    <property type="method" value="X-ray"/>
    <property type="resolution" value="1.95 A"/>
    <property type="chains" value="A/B=1-389"/>
</dbReference>
<dbReference type="PDB" id="1JWX">
    <property type="method" value="X-ray"/>
    <property type="resolution" value="1.63 A"/>
    <property type="chains" value="A=1-389"/>
</dbReference>
<dbReference type="PDB" id="1U0V">
    <property type="method" value="X-ray"/>
    <property type="resolution" value="1.90 A"/>
    <property type="chains" value="A/B=1-389"/>
</dbReference>
<dbReference type="PDB" id="1U0W">
    <property type="method" value="X-ray"/>
    <property type="resolution" value="2.00 A"/>
    <property type="chains" value="A/B/C/D=1-389"/>
</dbReference>
<dbReference type="PDBsum" id="1BI5"/>
<dbReference type="PDBsum" id="1BQ6"/>
<dbReference type="PDBsum" id="1CGK"/>
<dbReference type="PDBsum" id="1CGZ"/>
<dbReference type="PDBsum" id="1CHW"/>
<dbReference type="PDBsum" id="1CML"/>
<dbReference type="PDBsum" id="1D6F"/>
<dbReference type="PDBsum" id="1D6H"/>
<dbReference type="PDBsum" id="1D6I"/>
<dbReference type="PDBsum" id="1I86"/>
<dbReference type="PDBsum" id="1I88"/>
<dbReference type="PDBsum" id="1I89"/>
<dbReference type="PDBsum" id="1I8B"/>
<dbReference type="PDBsum" id="1JWX"/>
<dbReference type="PDBsum" id="1U0V"/>
<dbReference type="PDBsum" id="1U0W"/>
<dbReference type="SMR" id="P30074"/>
<dbReference type="BRENDA" id="2.3.1.74">
    <property type="organism ID" value="3078"/>
</dbReference>
<dbReference type="SABIO-RK" id="P30074"/>
<dbReference type="UniPathway" id="UPA00154"/>
<dbReference type="EvolutionaryTrace" id="P30074"/>
<dbReference type="GO" id="GO:0016210">
    <property type="term" value="F:naringenin-chalcone synthase activity"/>
    <property type="evidence" value="ECO:0000314"/>
    <property type="project" value="UniProtKB"/>
</dbReference>
<dbReference type="GO" id="GO:0009715">
    <property type="term" value="P:chalcone biosynthetic process"/>
    <property type="evidence" value="ECO:0000314"/>
    <property type="project" value="UniProtKB"/>
</dbReference>
<dbReference type="GO" id="GO:0009813">
    <property type="term" value="P:flavonoid biosynthetic process"/>
    <property type="evidence" value="ECO:0007669"/>
    <property type="project" value="UniProtKB-UniPathway"/>
</dbReference>
<dbReference type="GO" id="GO:0030639">
    <property type="term" value="P:polyketide biosynthetic process"/>
    <property type="evidence" value="ECO:0007669"/>
    <property type="project" value="TreeGrafter"/>
</dbReference>
<dbReference type="CDD" id="cd00831">
    <property type="entry name" value="CHS_like"/>
    <property type="match status" value="1"/>
</dbReference>
<dbReference type="FunFam" id="3.40.47.10:FF:000014">
    <property type="entry name" value="Chalcone synthase 1"/>
    <property type="match status" value="1"/>
</dbReference>
<dbReference type="FunFam" id="3.40.47.10:FF:000025">
    <property type="entry name" value="Chalcone synthase 2"/>
    <property type="match status" value="1"/>
</dbReference>
<dbReference type="Gene3D" id="3.40.47.10">
    <property type="match status" value="2"/>
</dbReference>
<dbReference type="InterPro" id="IPR012328">
    <property type="entry name" value="Chalcone/stilbene_synt_C"/>
</dbReference>
<dbReference type="InterPro" id="IPR001099">
    <property type="entry name" value="Chalcone/stilbene_synt_N"/>
</dbReference>
<dbReference type="InterPro" id="IPR018088">
    <property type="entry name" value="Chalcone/stilbene_synthase_AS"/>
</dbReference>
<dbReference type="InterPro" id="IPR011141">
    <property type="entry name" value="Polyketide_synthase_type-III"/>
</dbReference>
<dbReference type="InterPro" id="IPR016039">
    <property type="entry name" value="Thiolase-like"/>
</dbReference>
<dbReference type="PANTHER" id="PTHR11877:SF62">
    <property type="entry name" value="CHALCONE SYNTHASE 7"/>
    <property type="match status" value="1"/>
</dbReference>
<dbReference type="PANTHER" id="PTHR11877">
    <property type="entry name" value="HYDROXYMETHYLGLUTARYL-COA SYNTHASE"/>
    <property type="match status" value="1"/>
</dbReference>
<dbReference type="Pfam" id="PF02797">
    <property type="entry name" value="Chal_sti_synt_C"/>
    <property type="match status" value="1"/>
</dbReference>
<dbReference type="Pfam" id="PF00195">
    <property type="entry name" value="Chal_sti_synt_N"/>
    <property type="match status" value="1"/>
</dbReference>
<dbReference type="PIRSF" id="PIRSF000451">
    <property type="entry name" value="PKS_III"/>
    <property type="match status" value="1"/>
</dbReference>
<dbReference type="SUPFAM" id="SSF53901">
    <property type="entry name" value="Thiolase-like"/>
    <property type="match status" value="2"/>
</dbReference>
<dbReference type="PROSITE" id="PS00441">
    <property type="entry name" value="CHALCONE_SYNTH"/>
    <property type="match status" value="1"/>
</dbReference>